<organism>
    <name type="scientific">Aeromonas hydrophila subsp. hydrophila (strain ATCC 7966 / DSM 30187 / BCRC 13018 / CCUG 14551 / JCM 1027 / KCTC 2358 / NCIMB 9240 / NCTC 8049)</name>
    <dbReference type="NCBI Taxonomy" id="380703"/>
    <lineage>
        <taxon>Bacteria</taxon>
        <taxon>Pseudomonadati</taxon>
        <taxon>Pseudomonadota</taxon>
        <taxon>Gammaproteobacteria</taxon>
        <taxon>Aeromonadales</taxon>
        <taxon>Aeromonadaceae</taxon>
        <taxon>Aeromonas</taxon>
    </lineage>
</organism>
<protein>
    <recommendedName>
        <fullName evidence="1">Ribosomal RNA small subunit methyltransferase J</fullName>
        <ecNumber evidence="1">2.1.1.242</ecNumber>
    </recommendedName>
    <alternativeName>
        <fullName evidence="1">16S rRNA m2G1516 methyltransferase</fullName>
    </alternativeName>
    <alternativeName>
        <fullName evidence="1">rRNA (guanine-N(2)-)-methyltransferase</fullName>
    </alternativeName>
</protein>
<proteinExistence type="inferred from homology"/>
<accession>A0KEG6</accession>
<sequence>MQILLEDPAKAPQAEALASQLGQTDLPQFALVFTAARLELRKLDEPKLGAVYVDFVEGAVAHRRKFGGGRGQSIAKAVGLKAGAMPRVVDATAGLGRDAFVLASLGCKVTMIERSPVVAALLQDGLARAALDPEIGPWVRERMQLRHGPAVETLLGLTERPDVIYLDPMFPHKQKSALVKKEMRVFQSLVGPDLDADALLPAALAMADKRVVVKRPDYAGWLNEHKPSMAIETKSNRFDVYVMAALAG</sequence>
<keyword id="KW-0963">Cytoplasm</keyword>
<keyword id="KW-0489">Methyltransferase</keyword>
<keyword id="KW-1185">Reference proteome</keyword>
<keyword id="KW-0698">rRNA processing</keyword>
<keyword id="KW-0949">S-adenosyl-L-methionine</keyword>
<keyword id="KW-0808">Transferase</keyword>
<feature type="chain" id="PRO_0000292623" description="Ribosomal RNA small subunit methyltransferase J">
    <location>
        <begin position="1"/>
        <end position="248"/>
    </location>
</feature>
<feature type="binding site" evidence="1">
    <location>
        <begin position="97"/>
        <end position="98"/>
    </location>
    <ligand>
        <name>S-adenosyl-L-methionine</name>
        <dbReference type="ChEBI" id="CHEBI:59789"/>
    </ligand>
</feature>
<feature type="binding site" evidence="1">
    <location>
        <begin position="113"/>
        <end position="114"/>
    </location>
    <ligand>
        <name>S-adenosyl-L-methionine</name>
        <dbReference type="ChEBI" id="CHEBI:59789"/>
    </ligand>
</feature>
<feature type="binding site" evidence="1">
    <location>
        <position position="167"/>
    </location>
    <ligand>
        <name>S-adenosyl-L-methionine</name>
        <dbReference type="ChEBI" id="CHEBI:59789"/>
    </ligand>
</feature>
<evidence type="ECO:0000255" key="1">
    <source>
        <dbReference type="HAMAP-Rule" id="MF_01523"/>
    </source>
</evidence>
<dbReference type="EC" id="2.1.1.242" evidence="1"/>
<dbReference type="EMBL" id="CP000462">
    <property type="protein sequence ID" value="ABK36028.1"/>
    <property type="molecule type" value="Genomic_DNA"/>
</dbReference>
<dbReference type="RefSeq" id="WP_011704126.1">
    <property type="nucleotide sequence ID" value="NC_008570.1"/>
</dbReference>
<dbReference type="RefSeq" id="YP_854618.1">
    <property type="nucleotide sequence ID" value="NC_008570.1"/>
</dbReference>
<dbReference type="SMR" id="A0KEG6"/>
<dbReference type="STRING" id="380703.AHA_0094"/>
<dbReference type="EnsemblBacteria" id="ABK36028">
    <property type="protein sequence ID" value="ABK36028"/>
    <property type="gene ID" value="AHA_0094"/>
</dbReference>
<dbReference type="GeneID" id="4490989"/>
<dbReference type="KEGG" id="aha:AHA_0094"/>
<dbReference type="PATRIC" id="fig|380703.7.peg.85"/>
<dbReference type="eggNOG" id="COG0742">
    <property type="taxonomic scope" value="Bacteria"/>
</dbReference>
<dbReference type="HOGENOM" id="CLU_076324_0_1_6"/>
<dbReference type="OrthoDB" id="3191794at2"/>
<dbReference type="Proteomes" id="UP000000756">
    <property type="component" value="Chromosome"/>
</dbReference>
<dbReference type="GO" id="GO:0005737">
    <property type="term" value="C:cytoplasm"/>
    <property type="evidence" value="ECO:0007669"/>
    <property type="project" value="UniProtKB-SubCell"/>
</dbReference>
<dbReference type="GO" id="GO:0008990">
    <property type="term" value="F:rRNA (guanine-N2-)-methyltransferase activity"/>
    <property type="evidence" value="ECO:0007669"/>
    <property type="project" value="UniProtKB-UniRule"/>
</dbReference>
<dbReference type="CDD" id="cd02440">
    <property type="entry name" value="AdoMet_MTases"/>
    <property type="match status" value="1"/>
</dbReference>
<dbReference type="Gene3D" id="3.40.50.150">
    <property type="entry name" value="Vaccinia Virus protein VP39"/>
    <property type="match status" value="1"/>
</dbReference>
<dbReference type="Gene3D" id="3.40.1630.10">
    <property type="entry name" value="YhiQ-like domain"/>
    <property type="match status" value="1"/>
</dbReference>
<dbReference type="HAMAP" id="MF_01523">
    <property type="entry name" value="16SrRNA_methyltr_J"/>
    <property type="match status" value="1"/>
</dbReference>
<dbReference type="InterPro" id="IPR007536">
    <property type="entry name" value="16SrRNA_methylTrfase_J"/>
</dbReference>
<dbReference type="InterPro" id="IPR029063">
    <property type="entry name" value="SAM-dependent_MTases_sf"/>
</dbReference>
<dbReference type="PANTHER" id="PTHR36112">
    <property type="entry name" value="RIBOSOMAL RNA SMALL SUBUNIT METHYLTRANSFERASE J"/>
    <property type="match status" value="1"/>
</dbReference>
<dbReference type="PANTHER" id="PTHR36112:SF1">
    <property type="entry name" value="RIBOSOMAL RNA SMALL SUBUNIT METHYLTRANSFERASE J"/>
    <property type="match status" value="1"/>
</dbReference>
<dbReference type="Pfam" id="PF04445">
    <property type="entry name" value="SAM_MT"/>
    <property type="match status" value="1"/>
</dbReference>
<dbReference type="SUPFAM" id="SSF53335">
    <property type="entry name" value="S-adenosyl-L-methionine-dependent methyltransferases"/>
    <property type="match status" value="1"/>
</dbReference>
<comment type="function">
    <text evidence="1">Specifically methylates the guanosine in position 1516 of 16S rRNA.</text>
</comment>
<comment type="catalytic activity">
    <reaction evidence="1">
        <text>guanosine(1516) in 16S rRNA + S-adenosyl-L-methionine = N(2)-methylguanosine(1516) in 16S rRNA + S-adenosyl-L-homocysteine + H(+)</text>
        <dbReference type="Rhea" id="RHEA:43220"/>
        <dbReference type="Rhea" id="RHEA-COMP:10412"/>
        <dbReference type="Rhea" id="RHEA-COMP:10413"/>
        <dbReference type="ChEBI" id="CHEBI:15378"/>
        <dbReference type="ChEBI" id="CHEBI:57856"/>
        <dbReference type="ChEBI" id="CHEBI:59789"/>
        <dbReference type="ChEBI" id="CHEBI:74269"/>
        <dbReference type="ChEBI" id="CHEBI:74481"/>
        <dbReference type="EC" id="2.1.1.242"/>
    </reaction>
</comment>
<comment type="subcellular location">
    <subcellularLocation>
        <location evidence="1">Cytoplasm</location>
    </subcellularLocation>
</comment>
<comment type="similarity">
    <text evidence="1">Belongs to the methyltransferase superfamily. RsmJ family.</text>
</comment>
<reference key="1">
    <citation type="journal article" date="2006" name="J. Bacteriol.">
        <title>Genome sequence of Aeromonas hydrophila ATCC 7966T: jack of all trades.</title>
        <authorList>
            <person name="Seshadri R."/>
            <person name="Joseph S.W."/>
            <person name="Chopra A.K."/>
            <person name="Sha J."/>
            <person name="Shaw J."/>
            <person name="Graf J."/>
            <person name="Haft D.H."/>
            <person name="Wu M."/>
            <person name="Ren Q."/>
            <person name="Rosovitz M.J."/>
            <person name="Madupu R."/>
            <person name="Tallon L."/>
            <person name="Kim M."/>
            <person name="Jin S."/>
            <person name="Vuong H."/>
            <person name="Stine O.C."/>
            <person name="Ali A."/>
            <person name="Horneman A.J."/>
            <person name="Heidelberg J.F."/>
        </authorList>
    </citation>
    <scope>NUCLEOTIDE SEQUENCE [LARGE SCALE GENOMIC DNA]</scope>
    <source>
        <strain>ATCC 7966 / DSM 30187 / BCRC 13018 / CCUG 14551 / JCM 1027 / KCTC 2358 / NCIMB 9240 / NCTC 8049</strain>
    </source>
</reference>
<gene>
    <name evidence="1" type="primary">rsmJ</name>
    <name type="ordered locus">AHA_0094</name>
</gene>
<name>RSMJ_AERHH</name>